<gene>
    <name evidence="4" type="primary">tdc</name>
    <name evidence="7" type="synonym">mfnA_1</name>
</gene>
<reference key="1">
    <citation type="journal article" date="2019" name="Nat. Commun.">
        <title>Gut bacterial tyrosine decarboxylases restrict levels of levodopa in the treatment of Parkinson's disease.</title>
        <authorList>
            <person name="van Kessel S.P."/>
            <person name="Frye A.K."/>
            <person name="El-Gendy A.O."/>
            <person name="Castejon M."/>
            <person name="Keshavarzian A."/>
            <person name="van Dijk G."/>
            <person name="El Aidy S."/>
        </authorList>
    </citation>
    <scope>NUCLEOTIDE SEQUENCE [GENOMIC DNA]</scope>
    <scope>FUNCTION</scope>
    <scope>CATALYTIC ACTIVITY</scope>
    <scope>BIOPHYSICOCHEMICAL PROPERTIES</scope>
    <scope>ACTIVITY REGULATION</scope>
    <source>
        <strain>W54</strain>
    </source>
</reference>
<feature type="chain" id="PRO_0000448495" description="L-tyrosine decarboxylase">
    <location>
        <begin position="1"/>
        <end position="611"/>
    </location>
</feature>
<feature type="active site" description="Proton donor" evidence="1">
    <location>
        <position position="413"/>
    </location>
</feature>
<feature type="binding site" description="in other chain" evidence="1">
    <location>
        <begin position="151"/>
        <end position="152"/>
    </location>
    <ligand>
        <name>pyridoxal 5'-phosphate</name>
        <dbReference type="ChEBI" id="CHEBI:597326"/>
        <note>ligand shared between dimeric partners</note>
    </ligand>
</feature>
<feature type="binding site" description="in other chain" evidence="1">
    <location>
        <position position="292"/>
    </location>
    <ligand>
        <name>pyridoxal 5'-phosphate</name>
        <dbReference type="ChEBI" id="CHEBI:597326"/>
        <note>ligand shared between dimeric partners</note>
    </ligand>
</feature>
<feature type="binding site" description="in other chain" evidence="1">
    <location>
        <begin position="382"/>
        <end position="384"/>
    </location>
    <ligand>
        <name>pyridoxal 5'-phosphate</name>
        <dbReference type="ChEBI" id="CHEBI:597326"/>
        <note>ligand shared between dimeric partners</note>
    </ligand>
</feature>
<feature type="binding site" evidence="1">
    <location>
        <position position="433"/>
    </location>
    <ligand>
        <name>pyridoxal 5'-phosphate</name>
        <dbReference type="ChEBI" id="CHEBI:597326"/>
        <note>ligand shared between dimeric partners</note>
    </ligand>
</feature>
<feature type="modified residue" description="N6-(pyridoxal phosphate)lysine" evidence="1">
    <location>
        <position position="385"/>
    </location>
</feature>
<dbReference type="EC" id="4.1.1.25" evidence="3"/>
<dbReference type="EC" id="4.1.1.-" evidence="3"/>
<dbReference type="EMBL" id="MH358384">
    <property type="protein sequence ID" value="QAV53955.1"/>
    <property type="molecule type" value="Genomic_DNA"/>
</dbReference>
<dbReference type="RefSeq" id="WP_002342784.1">
    <property type="nucleotide sequence ID" value="NZ_PUBI01000015.1"/>
</dbReference>
<dbReference type="SMR" id="A0A481NV25"/>
<dbReference type="STRING" id="1352.AL014_10560"/>
<dbReference type="SABIO-RK" id="A0A481NV25"/>
<dbReference type="GO" id="GO:0036468">
    <property type="term" value="F:L-dopa decarboxylase activity"/>
    <property type="evidence" value="ECO:0000314"/>
    <property type="project" value="UniProtKB"/>
</dbReference>
<dbReference type="GO" id="GO:0030170">
    <property type="term" value="F:pyridoxal phosphate binding"/>
    <property type="evidence" value="ECO:0007669"/>
    <property type="project" value="InterPro"/>
</dbReference>
<dbReference type="GO" id="GO:0004837">
    <property type="term" value="F:tyrosine decarboxylase activity"/>
    <property type="evidence" value="ECO:0000314"/>
    <property type="project" value="UniProtKB"/>
</dbReference>
<dbReference type="GO" id="GO:1903184">
    <property type="term" value="P:L-dopa metabolic process"/>
    <property type="evidence" value="ECO:0000314"/>
    <property type="project" value="UniProtKB"/>
</dbReference>
<dbReference type="Gene3D" id="3.40.640.10">
    <property type="entry name" value="Type I PLP-dependent aspartate aminotransferase-like (Major domain)"/>
    <property type="match status" value="1"/>
</dbReference>
<dbReference type="InterPro" id="IPR050477">
    <property type="entry name" value="GrpII_AminoAcid_Decarb"/>
</dbReference>
<dbReference type="InterPro" id="IPR002129">
    <property type="entry name" value="PyrdxlP-dep_de-COase"/>
</dbReference>
<dbReference type="InterPro" id="IPR015424">
    <property type="entry name" value="PyrdxlP-dep_Trfase"/>
</dbReference>
<dbReference type="InterPro" id="IPR015421">
    <property type="entry name" value="PyrdxlP-dep_Trfase_major"/>
</dbReference>
<dbReference type="InterPro" id="IPR021115">
    <property type="entry name" value="Pyridoxal-P_BS"/>
</dbReference>
<dbReference type="InterPro" id="IPR049373">
    <property type="entry name" value="TyrDC_C"/>
</dbReference>
<dbReference type="InterPro" id="IPR022397">
    <property type="entry name" value="Tyrosine_deCO2ase_bac"/>
</dbReference>
<dbReference type="NCBIfam" id="TIGR03811">
    <property type="entry name" value="tyr_de_CO2_Ent"/>
    <property type="match status" value="1"/>
</dbReference>
<dbReference type="PANTHER" id="PTHR42735">
    <property type="match status" value="1"/>
</dbReference>
<dbReference type="PANTHER" id="PTHR42735:SF4">
    <property type="entry name" value="PYRIDOXAL PHOSPHATE-DEPENDENT DECARBOXYLASE FAMILY PROTEIN"/>
    <property type="match status" value="1"/>
</dbReference>
<dbReference type="Pfam" id="PF00282">
    <property type="entry name" value="Pyridoxal_deC"/>
    <property type="match status" value="1"/>
</dbReference>
<dbReference type="Pfam" id="PF21391">
    <property type="entry name" value="tyr_de_CO2_C"/>
    <property type="match status" value="1"/>
</dbReference>
<dbReference type="SUPFAM" id="SSF53383">
    <property type="entry name" value="PLP-dependent transferases"/>
    <property type="match status" value="1"/>
</dbReference>
<dbReference type="PROSITE" id="PS00392">
    <property type="entry name" value="DDC_GAD_HDC_YDC"/>
    <property type="match status" value="1"/>
</dbReference>
<protein>
    <recommendedName>
        <fullName evidence="4">L-tyrosine decarboxylase</fullName>
        <shortName evidence="4">TDC</shortName>
        <ecNumber evidence="3">4.1.1.25</ecNumber>
    </recommendedName>
    <alternativeName>
        <fullName evidence="6">Levodopa decarboxylase</fullName>
        <shortName evidence="6">L-dopa decarboxylase</shortName>
        <ecNumber evidence="3">4.1.1.-</ecNumber>
    </alternativeName>
</protein>
<keyword id="KW-0175">Coiled coil</keyword>
<keyword id="KW-0210">Decarboxylase</keyword>
<keyword id="KW-0456">Lyase</keyword>
<keyword id="KW-0663">Pyridoxal phosphate</keyword>
<organism>
    <name type="scientific">Enterococcus faecium</name>
    <name type="common">Streptococcus faecium</name>
    <dbReference type="NCBI Taxonomy" id="1352"/>
    <lineage>
        <taxon>Bacteria</taxon>
        <taxon>Bacillati</taxon>
        <taxon>Bacillota</taxon>
        <taxon>Bacilli</taxon>
        <taxon>Lactobacillales</taxon>
        <taxon>Enterococcaceae</taxon>
        <taxon>Enterococcus</taxon>
    </lineage>
</organism>
<evidence type="ECO:0000250" key="1">
    <source>
        <dbReference type="UniProtKB" id="J7GQ11"/>
    </source>
</evidence>
<evidence type="ECO:0000250" key="2">
    <source>
        <dbReference type="UniProtKB" id="Q838D6"/>
    </source>
</evidence>
<evidence type="ECO:0000269" key="3">
    <source>
    </source>
</evidence>
<evidence type="ECO:0000303" key="4">
    <source>
    </source>
</evidence>
<evidence type="ECO:0000305" key="5"/>
<evidence type="ECO:0000305" key="6">
    <source>
    </source>
</evidence>
<evidence type="ECO:0000312" key="7">
    <source>
        <dbReference type="EMBL" id="QAV53955.1"/>
    </source>
</evidence>
<comment type="function">
    <text evidence="2 3">Catalyzes the decarboxylation of L-tyrosine to produce tyramine (PubMed:30659181). Plays a role in acid resistance since tyramine production via tyrosine decarboxylation appears to provide a cytosolic pH maintenance mechanism that helps the bacterium cope with acid stress such as that encountered in gastrointestinal tract (GIT) environments. Therefore, may contribute to the colonization of the human GIT by E.faecium (By similarity).</text>
</comment>
<comment type="function">
    <text evidence="3">Also involved in drug metabolism, being able to catalyze decarboxylation of levodopa (L-dopa) to dopamine. In gut microbiota this enzyme is in fact exclusively responsible for the decarboxylation of levodopa, and thus reduces in situ levels of levodopa in the treatment of Parkinson's disease. It was shown that abundance of bacterial tyrosine decarboxylase in the proximal small intestine - the primary site of levodopa absorption - contributes to interindividual variation in drug efficacy and can explain the requirement for an increased dosage regimen of levodopa treatment in Parkinson's disease patients.</text>
</comment>
<comment type="catalytic activity">
    <reaction evidence="3">
        <text>L-tyrosine + H(+) = tyramine + CO2</text>
        <dbReference type="Rhea" id="RHEA:14345"/>
        <dbReference type="ChEBI" id="CHEBI:15378"/>
        <dbReference type="ChEBI" id="CHEBI:16526"/>
        <dbReference type="ChEBI" id="CHEBI:58315"/>
        <dbReference type="ChEBI" id="CHEBI:327995"/>
        <dbReference type="EC" id="4.1.1.25"/>
    </reaction>
    <physiologicalReaction direction="left-to-right" evidence="6">
        <dbReference type="Rhea" id="RHEA:14346"/>
    </physiologicalReaction>
</comment>
<comment type="catalytic activity">
    <reaction evidence="3">
        <text>L-dopa + H(+) = dopamine + CO2</text>
        <dbReference type="Rhea" id="RHEA:12272"/>
        <dbReference type="ChEBI" id="CHEBI:15378"/>
        <dbReference type="ChEBI" id="CHEBI:16526"/>
        <dbReference type="ChEBI" id="CHEBI:57504"/>
        <dbReference type="ChEBI" id="CHEBI:59905"/>
    </reaction>
    <physiologicalReaction direction="left-to-right" evidence="6">
        <dbReference type="Rhea" id="RHEA:12273"/>
    </physiologicalReaction>
</comment>
<comment type="cofactor">
    <cofactor evidence="6">
        <name>pyridoxal 5'-phosphate</name>
        <dbReference type="ChEBI" id="CHEBI:597326"/>
    </cofactor>
</comment>
<comment type="activity regulation">
    <text evidence="3">Levodopa decarboxylation is not inhibited by carbidopa, benserazide, and methyldopa, that are three human L-dopa decarboxylase inhibitors.</text>
</comment>
<comment type="biophysicochemical properties">
    <kinetics>
        <KM evidence="3">0.2 mM for L-tyrosine (at pH 5.0)</KM>
        <KM evidence="3">0.4 mM for L-dopa (at pH 5.0)</KM>
        <Vmax evidence="3">4.4 umol/min/mg enzyme for the decarboxylation of L-tyrosine (at pH 5.0)</Vmax>
        <Vmax evidence="3">3.4 umol/min/mg enzyme for the decarboxylation of L-dopa (at pH 5.0)</Vmax>
        <text evidence="3">kcat is 435.6 min(-1) for the decarboxylation of L-tyrosine. kcat is 342.4 min(-1) for the decarboxylation of L-dopa (at pH 5.0).</text>
    </kinetics>
</comment>
<comment type="pathway">
    <text evidence="6">Amino-acid metabolism.</text>
</comment>
<comment type="subunit">
    <text evidence="1">Homodimer.</text>
</comment>
<comment type="similarity">
    <text evidence="5">Belongs to the group II decarboxylase family. Tyrosine decarboxylase subfamily.</text>
</comment>
<accession>A0A481NV25</accession>
<sequence>MKDMDIKAVFIGDKAENGPVYKMLLNKMVDEHLGWRENYIPSDMPAISEGDKLTPDYLATRDHMIEVLDEVSQRLRAGSIPWHSAGRYWGQMNAETLMPALLAYNYAMLWNPNNVALESSMATSQMEAEVGQDFASLFNMADGWGHIAADGSIANLEGLWYARCIKSIPLAVKEVLPEKVKNMSEWALLNLSVEEILEMTESFTDEEMDEVKAASSRSGKNIQKLGKWLVPQTKHYSWMKALDICGVGLDQMVAIPVQEDYRMDINALEKTIRELADQKIPILGVVAVVGTTEEGQVDSVDKIIQLREKLKDEGIYFYLHVDAAYGGYARSLFLNEAGEFVPYASLAEFFEEHHVFHHYVTIDKEVYEGFRAISEADSVTIDPHKMGYVPYAAGGIVIKHKNMRNIISYFAPYVFEKSVKAPDMLGAYILEGSKAGATAAAVWTAHRVLPLNVTGYGQLIGASIEAAQRFREFLEQLHFTVKGKTIEVYPLNHPDFNMVNWVFKVQDCTDLNAINELNEKMFDRSSYMDGDVYGERFITSHTTFTQEDYGDSPIRFIERMGLSKEEWQKEQQITLLRAAIMTPYLNDDRIFNFYTKEIAKAMEKKLNEIIK</sequence>
<name>TYRDC_ENTFC</name>
<proteinExistence type="evidence at protein level"/>